<reference key="1">
    <citation type="submission" date="2007-10" db="EMBL/GenBank/DDBJ databases">
        <title>Complete sequence of Desulfococcus oleovorans Hxd3.</title>
        <authorList>
            <consortium name="US DOE Joint Genome Institute"/>
            <person name="Copeland A."/>
            <person name="Lucas S."/>
            <person name="Lapidus A."/>
            <person name="Barry K."/>
            <person name="Glavina del Rio T."/>
            <person name="Dalin E."/>
            <person name="Tice H."/>
            <person name="Pitluck S."/>
            <person name="Kiss H."/>
            <person name="Brettin T."/>
            <person name="Bruce D."/>
            <person name="Detter J.C."/>
            <person name="Han C."/>
            <person name="Schmutz J."/>
            <person name="Larimer F."/>
            <person name="Land M."/>
            <person name="Hauser L."/>
            <person name="Kyrpides N."/>
            <person name="Kim E."/>
            <person name="Wawrik B."/>
            <person name="Richardson P."/>
        </authorList>
    </citation>
    <scope>NUCLEOTIDE SEQUENCE [LARGE SCALE GENOMIC DNA]</scope>
    <source>
        <strain>DSM 6200 / JCM 39069 / Hxd3</strain>
    </source>
</reference>
<dbReference type="EMBL" id="CP000859">
    <property type="protein sequence ID" value="ABW67879.1"/>
    <property type="molecule type" value="Genomic_DNA"/>
</dbReference>
<dbReference type="RefSeq" id="WP_012175491.1">
    <property type="nucleotide sequence ID" value="NC_009943.1"/>
</dbReference>
<dbReference type="SMR" id="A8ZTU6"/>
<dbReference type="STRING" id="96561.Dole_2075"/>
<dbReference type="KEGG" id="dol:Dole_2075"/>
<dbReference type="eggNOG" id="COG0781">
    <property type="taxonomic scope" value="Bacteria"/>
</dbReference>
<dbReference type="HOGENOM" id="CLU_087843_3_3_7"/>
<dbReference type="OrthoDB" id="9797817at2"/>
<dbReference type="Proteomes" id="UP000008561">
    <property type="component" value="Chromosome"/>
</dbReference>
<dbReference type="GO" id="GO:0005829">
    <property type="term" value="C:cytosol"/>
    <property type="evidence" value="ECO:0007669"/>
    <property type="project" value="TreeGrafter"/>
</dbReference>
<dbReference type="GO" id="GO:0003723">
    <property type="term" value="F:RNA binding"/>
    <property type="evidence" value="ECO:0007669"/>
    <property type="project" value="UniProtKB-UniRule"/>
</dbReference>
<dbReference type="GO" id="GO:0006353">
    <property type="term" value="P:DNA-templated transcription termination"/>
    <property type="evidence" value="ECO:0007669"/>
    <property type="project" value="UniProtKB-UniRule"/>
</dbReference>
<dbReference type="GO" id="GO:0031564">
    <property type="term" value="P:transcription antitermination"/>
    <property type="evidence" value="ECO:0007669"/>
    <property type="project" value="UniProtKB-KW"/>
</dbReference>
<dbReference type="Gene3D" id="1.10.940.10">
    <property type="entry name" value="NusB-like"/>
    <property type="match status" value="1"/>
</dbReference>
<dbReference type="HAMAP" id="MF_00073">
    <property type="entry name" value="NusB"/>
    <property type="match status" value="1"/>
</dbReference>
<dbReference type="InterPro" id="IPR035926">
    <property type="entry name" value="NusB-like_sf"/>
</dbReference>
<dbReference type="InterPro" id="IPR011605">
    <property type="entry name" value="NusB_fam"/>
</dbReference>
<dbReference type="InterPro" id="IPR006027">
    <property type="entry name" value="NusB_RsmB_TIM44"/>
</dbReference>
<dbReference type="NCBIfam" id="TIGR01951">
    <property type="entry name" value="nusB"/>
    <property type="match status" value="1"/>
</dbReference>
<dbReference type="PANTHER" id="PTHR11078:SF3">
    <property type="entry name" value="ANTITERMINATION NUSB DOMAIN-CONTAINING PROTEIN"/>
    <property type="match status" value="1"/>
</dbReference>
<dbReference type="PANTHER" id="PTHR11078">
    <property type="entry name" value="N UTILIZATION SUBSTANCE PROTEIN B-RELATED"/>
    <property type="match status" value="1"/>
</dbReference>
<dbReference type="Pfam" id="PF01029">
    <property type="entry name" value="NusB"/>
    <property type="match status" value="1"/>
</dbReference>
<dbReference type="SUPFAM" id="SSF48013">
    <property type="entry name" value="NusB-like"/>
    <property type="match status" value="1"/>
</dbReference>
<name>NUSB_DESOH</name>
<proteinExistence type="inferred from homology"/>
<sequence>MASRRRSRELALQFLFSYDLNAAGAGDFDAWMEDFCARFNLSEKNFPHFFTLAQGVKNRWEKLNDLLAESSEHWKLSRMSGVDRNVMRIAIFEMLYCDDVPPRVAINEAIEIGKKYGTDESGAFINGVLDRINKELGGSEADLPENMNTTNSKE</sequence>
<feature type="chain" id="PRO_1000117047" description="Transcription antitermination protein NusB">
    <location>
        <begin position="1"/>
        <end position="154"/>
    </location>
</feature>
<evidence type="ECO:0000255" key="1">
    <source>
        <dbReference type="HAMAP-Rule" id="MF_00073"/>
    </source>
</evidence>
<accession>A8ZTU6</accession>
<protein>
    <recommendedName>
        <fullName evidence="1">Transcription antitermination protein NusB</fullName>
    </recommendedName>
    <alternativeName>
        <fullName evidence="1">Antitermination factor NusB</fullName>
    </alternativeName>
</protein>
<gene>
    <name evidence="1" type="primary">nusB</name>
    <name type="ordered locus">Dole_2075</name>
</gene>
<comment type="function">
    <text evidence="1">Involved in transcription antitermination. Required for transcription of ribosomal RNA (rRNA) genes. Binds specifically to the boxA antiterminator sequence of the ribosomal RNA (rrn) operons.</text>
</comment>
<comment type="similarity">
    <text evidence="1">Belongs to the NusB family.</text>
</comment>
<organism>
    <name type="scientific">Desulfosudis oleivorans (strain DSM 6200 / JCM 39069 / Hxd3)</name>
    <name type="common">Desulfococcus oleovorans</name>
    <dbReference type="NCBI Taxonomy" id="96561"/>
    <lineage>
        <taxon>Bacteria</taxon>
        <taxon>Pseudomonadati</taxon>
        <taxon>Thermodesulfobacteriota</taxon>
        <taxon>Desulfobacteria</taxon>
        <taxon>Desulfobacterales</taxon>
        <taxon>Desulfosudaceae</taxon>
        <taxon>Desulfosudis</taxon>
    </lineage>
</organism>
<keyword id="KW-1185">Reference proteome</keyword>
<keyword id="KW-0694">RNA-binding</keyword>
<keyword id="KW-0804">Transcription</keyword>
<keyword id="KW-0889">Transcription antitermination</keyword>
<keyword id="KW-0805">Transcription regulation</keyword>